<comment type="catalytic activity">
    <reaction evidence="2">
        <text>a primary alcohol + NAD(+) = an aldehyde + NADH + H(+)</text>
        <dbReference type="Rhea" id="RHEA:10736"/>
        <dbReference type="ChEBI" id="CHEBI:15378"/>
        <dbReference type="ChEBI" id="CHEBI:15734"/>
        <dbReference type="ChEBI" id="CHEBI:17478"/>
        <dbReference type="ChEBI" id="CHEBI:57540"/>
        <dbReference type="ChEBI" id="CHEBI:57945"/>
        <dbReference type="EC" id="1.1.1.1"/>
    </reaction>
</comment>
<comment type="catalytic activity">
    <reaction evidence="2">
        <text>a secondary alcohol + NAD(+) = a ketone + NADH + H(+)</text>
        <dbReference type="Rhea" id="RHEA:10740"/>
        <dbReference type="ChEBI" id="CHEBI:15378"/>
        <dbReference type="ChEBI" id="CHEBI:17087"/>
        <dbReference type="ChEBI" id="CHEBI:35681"/>
        <dbReference type="ChEBI" id="CHEBI:57540"/>
        <dbReference type="ChEBI" id="CHEBI:57945"/>
        <dbReference type="EC" id="1.1.1.1"/>
    </reaction>
</comment>
<comment type="cofactor">
    <cofactor evidence="2">
        <name>Zn(2+)</name>
        <dbReference type="ChEBI" id="CHEBI:29105"/>
    </cofactor>
    <text evidence="2">Binds 2 Zn(2+) ions per subunit.</text>
</comment>
<comment type="subunit">
    <text evidence="2">Homodimer.</text>
</comment>
<comment type="subcellular location">
    <subcellularLocation>
        <location evidence="2">Cytoplasm</location>
    </subcellularLocation>
</comment>
<comment type="similarity">
    <text evidence="3">Belongs to the zinc-containing alcohol dehydrogenase family. Class-III subfamily.</text>
</comment>
<name>ADHL1_ARATH</name>
<proteinExistence type="evidence at transcript level"/>
<protein>
    <recommendedName>
        <fullName>Alcohol dehydrogenase-like 1</fullName>
        <ecNumber evidence="2">1.1.1.1</ecNumber>
    </recommendedName>
</protein>
<gene>
    <name type="ordered locus">At1g22430</name>
    <name type="ORF">F12K8.22</name>
</gene>
<dbReference type="EC" id="1.1.1.1" evidence="2"/>
<dbReference type="EMBL" id="AC006551">
    <property type="protein sequence ID" value="AAF18534.1"/>
    <property type="molecule type" value="Genomic_DNA"/>
</dbReference>
<dbReference type="EMBL" id="CP002684">
    <property type="protein sequence ID" value="AEE30240.1"/>
    <property type="molecule type" value="Genomic_DNA"/>
</dbReference>
<dbReference type="EMBL" id="CP002684">
    <property type="protein sequence ID" value="AEE30241.1"/>
    <property type="molecule type" value="Genomic_DNA"/>
</dbReference>
<dbReference type="EMBL" id="AY093114">
    <property type="protein sequence ID" value="AAM13113.1"/>
    <property type="molecule type" value="mRNA"/>
</dbReference>
<dbReference type="EMBL" id="AY128821">
    <property type="protein sequence ID" value="AAM91221.1"/>
    <property type="molecule type" value="mRNA"/>
</dbReference>
<dbReference type="PIR" id="D86357">
    <property type="entry name" value="D86357"/>
</dbReference>
<dbReference type="RefSeq" id="NP_001031079.1">
    <property type="nucleotide sequence ID" value="NM_001036002.1"/>
</dbReference>
<dbReference type="RefSeq" id="NP_173659.1">
    <property type="nucleotide sequence ID" value="NM_102092.6"/>
</dbReference>
<dbReference type="SMR" id="Q9SK86"/>
<dbReference type="BioGRID" id="24088">
    <property type="interactions" value="1"/>
</dbReference>
<dbReference type="FunCoup" id="Q9SK86">
    <property type="interactions" value="498"/>
</dbReference>
<dbReference type="STRING" id="3702.Q9SK86"/>
<dbReference type="iPTMnet" id="Q9SK86"/>
<dbReference type="PaxDb" id="3702-AT1G22430.1"/>
<dbReference type="ProteomicsDB" id="244829"/>
<dbReference type="EnsemblPlants" id="AT1G22430.1">
    <property type="protein sequence ID" value="AT1G22430.1"/>
    <property type="gene ID" value="AT1G22430"/>
</dbReference>
<dbReference type="EnsemblPlants" id="AT1G22430.2">
    <property type="protein sequence ID" value="AT1G22430.2"/>
    <property type="gene ID" value="AT1G22430"/>
</dbReference>
<dbReference type="GeneID" id="838849"/>
<dbReference type="Gramene" id="AT1G22430.1">
    <property type="protein sequence ID" value="AT1G22430.1"/>
    <property type="gene ID" value="AT1G22430"/>
</dbReference>
<dbReference type="Gramene" id="AT1G22430.2">
    <property type="protein sequence ID" value="AT1G22430.2"/>
    <property type="gene ID" value="AT1G22430"/>
</dbReference>
<dbReference type="KEGG" id="ath:AT1G22430"/>
<dbReference type="Araport" id="AT1G22430"/>
<dbReference type="TAIR" id="AT1G22430"/>
<dbReference type="eggNOG" id="KOG0022">
    <property type="taxonomic scope" value="Eukaryota"/>
</dbReference>
<dbReference type="HOGENOM" id="CLU_026673_14_0_1"/>
<dbReference type="InParanoid" id="Q9SK86"/>
<dbReference type="OMA" id="YIAINER"/>
<dbReference type="OrthoDB" id="417550at2759"/>
<dbReference type="PhylomeDB" id="Q9SK86"/>
<dbReference type="BioCyc" id="ARA:AT1G22430-MONOMER"/>
<dbReference type="PRO" id="PR:Q9SK86"/>
<dbReference type="Proteomes" id="UP000006548">
    <property type="component" value="Chromosome 1"/>
</dbReference>
<dbReference type="ExpressionAtlas" id="Q9SK86">
    <property type="expression patterns" value="baseline and differential"/>
</dbReference>
<dbReference type="GO" id="GO:0005737">
    <property type="term" value="C:cytoplasm"/>
    <property type="evidence" value="ECO:0007669"/>
    <property type="project" value="UniProtKB-SubCell"/>
</dbReference>
<dbReference type="GO" id="GO:0005634">
    <property type="term" value="C:nucleus"/>
    <property type="evidence" value="ECO:0007005"/>
    <property type="project" value="TAIR"/>
</dbReference>
<dbReference type="GO" id="GO:0004022">
    <property type="term" value="F:alcohol dehydrogenase (NAD+) activity"/>
    <property type="evidence" value="ECO:0007669"/>
    <property type="project" value="UniProtKB-EC"/>
</dbReference>
<dbReference type="GO" id="GO:0008270">
    <property type="term" value="F:zinc ion binding"/>
    <property type="evidence" value="ECO:0007669"/>
    <property type="project" value="InterPro"/>
</dbReference>
<dbReference type="CDD" id="cd08301">
    <property type="entry name" value="alcohol_DH_plants"/>
    <property type="match status" value="1"/>
</dbReference>
<dbReference type="FunFam" id="3.90.180.10:FF:000007">
    <property type="entry name" value="Alcohol dehydrogenase 6"/>
    <property type="match status" value="1"/>
</dbReference>
<dbReference type="FunFam" id="3.40.50.720:FF:000003">
    <property type="entry name" value="S-(hydroxymethyl)glutathione dehydrogenase"/>
    <property type="match status" value="1"/>
</dbReference>
<dbReference type="Gene3D" id="3.90.180.10">
    <property type="entry name" value="Medium-chain alcohol dehydrogenases, catalytic domain"/>
    <property type="match status" value="1"/>
</dbReference>
<dbReference type="Gene3D" id="3.40.50.720">
    <property type="entry name" value="NAD(P)-binding Rossmann-like Domain"/>
    <property type="match status" value="1"/>
</dbReference>
<dbReference type="InterPro" id="IPR013149">
    <property type="entry name" value="ADH-like_C"/>
</dbReference>
<dbReference type="InterPro" id="IPR013154">
    <property type="entry name" value="ADH-like_N"/>
</dbReference>
<dbReference type="InterPro" id="IPR002328">
    <property type="entry name" value="ADH_Zn_CS"/>
</dbReference>
<dbReference type="InterPro" id="IPR011032">
    <property type="entry name" value="GroES-like_sf"/>
</dbReference>
<dbReference type="InterPro" id="IPR036291">
    <property type="entry name" value="NAD(P)-bd_dom_sf"/>
</dbReference>
<dbReference type="PANTHER" id="PTHR43880">
    <property type="entry name" value="ALCOHOL DEHYDROGENASE"/>
    <property type="match status" value="1"/>
</dbReference>
<dbReference type="PANTHER" id="PTHR43880:SF28">
    <property type="entry name" value="ALCOHOL DEHYDROGENASE-LIKE 1-RELATED"/>
    <property type="match status" value="1"/>
</dbReference>
<dbReference type="Pfam" id="PF08240">
    <property type="entry name" value="ADH_N"/>
    <property type="match status" value="1"/>
</dbReference>
<dbReference type="Pfam" id="PF00107">
    <property type="entry name" value="ADH_zinc_N"/>
    <property type="match status" value="1"/>
</dbReference>
<dbReference type="SUPFAM" id="SSF50129">
    <property type="entry name" value="GroES-like"/>
    <property type="match status" value="2"/>
</dbReference>
<dbReference type="SUPFAM" id="SSF51735">
    <property type="entry name" value="NAD(P)-binding Rossmann-fold domains"/>
    <property type="match status" value="1"/>
</dbReference>
<dbReference type="PROSITE" id="PS00059">
    <property type="entry name" value="ADH_ZINC"/>
    <property type="match status" value="1"/>
</dbReference>
<accession>Q9SK86</accession>
<evidence type="ECO:0000250" key="1">
    <source>
        <dbReference type="UniProtKB" id="P00327"/>
    </source>
</evidence>
<evidence type="ECO:0000250" key="2">
    <source>
        <dbReference type="UniProtKB" id="P06525"/>
    </source>
</evidence>
<evidence type="ECO:0000305" key="3"/>
<feature type="chain" id="PRO_0000299183" description="Alcohol dehydrogenase-like 1">
    <location>
        <begin position="1"/>
        <end position="388"/>
    </location>
</feature>
<feature type="binding site" evidence="2">
    <location>
        <position position="53"/>
    </location>
    <ligand>
        <name>Zn(2+)</name>
        <dbReference type="ChEBI" id="CHEBI:29105"/>
        <label>1</label>
        <note>catalytic</note>
    </ligand>
</feature>
<feature type="binding site" evidence="2">
    <location>
        <position position="55"/>
    </location>
    <ligand>
        <name>an alcohol</name>
        <dbReference type="ChEBI" id="CHEBI:30879"/>
    </ligand>
</feature>
<feature type="binding site" evidence="2">
    <location>
        <position position="55"/>
    </location>
    <ligand>
        <name>NAD(+)</name>
        <dbReference type="ChEBI" id="CHEBI:57540"/>
    </ligand>
</feature>
<feature type="binding site" evidence="2">
    <location>
        <position position="55"/>
    </location>
    <ligand>
        <name>Zn(2+)</name>
        <dbReference type="ChEBI" id="CHEBI:29105"/>
        <label>1</label>
        <note>catalytic</note>
    </ligand>
</feature>
<feature type="binding site" evidence="1">
    <location>
        <position position="76"/>
    </location>
    <ligand>
        <name>an alcohol</name>
        <dbReference type="ChEBI" id="CHEBI:30879"/>
    </ligand>
</feature>
<feature type="binding site" evidence="2">
    <location>
        <position position="76"/>
    </location>
    <ligand>
        <name>Zn(2+)</name>
        <dbReference type="ChEBI" id="CHEBI:29105"/>
        <label>1</label>
        <note>catalytic</note>
    </ligand>
</feature>
<feature type="binding site" evidence="2">
    <location>
        <position position="106"/>
    </location>
    <ligand>
        <name>Zn(2+)</name>
        <dbReference type="ChEBI" id="CHEBI:29105"/>
        <label>2</label>
    </ligand>
</feature>
<feature type="binding site" evidence="2">
    <location>
        <position position="109"/>
    </location>
    <ligand>
        <name>Zn(2+)</name>
        <dbReference type="ChEBI" id="CHEBI:29105"/>
        <label>2</label>
    </ligand>
</feature>
<feature type="binding site" evidence="2">
    <location>
        <position position="112"/>
    </location>
    <ligand>
        <name>Zn(2+)</name>
        <dbReference type="ChEBI" id="CHEBI:29105"/>
        <label>2</label>
    </ligand>
</feature>
<feature type="binding site" evidence="2">
    <location>
        <position position="120"/>
    </location>
    <ligand>
        <name>Zn(2+)</name>
        <dbReference type="ChEBI" id="CHEBI:29105"/>
        <label>2</label>
    </ligand>
</feature>
<feature type="binding site" evidence="2">
    <location>
        <position position="185"/>
    </location>
    <ligand>
        <name>Zn(2+)</name>
        <dbReference type="ChEBI" id="CHEBI:29105"/>
        <label>1</label>
        <note>catalytic</note>
    </ligand>
</feature>
<feature type="binding site" evidence="2">
    <location>
        <begin position="210"/>
        <end position="215"/>
    </location>
    <ligand>
        <name>NAD(+)</name>
        <dbReference type="ChEBI" id="CHEBI:57540"/>
    </ligand>
</feature>
<feature type="binding site" evidence="2">
    <location>
        <position position="234"/>
    </location>
    <ligand>
        <name>NAD(+)</name>
        <dbReference type="ChEBI" id="CHEBI:57540"/>
    </ligand>
</feature>
<feature type="binding site" evidence="2">
    <location>
        <position position="239"/>
    </location>
    <ligand>
        <name>NAD(+)</name>
        <dbReference type="ChEBI" id="CHEBI:57540"/>
    </ligand>
</feature>
<feature type="binding site" evidence="1">
    <location>
        <begin position="304"/>
        <end position="306"/>
    </location>
    <ligand>
        <name>NAD(+)</name>
        <dbReference type="ChEBI" id="CHEBI:57540"/>
    </ligand>
</feature>
<feature type="binding site" evidence="2">
    <location>
        <position position="331"/>
    </location>
    <ligand>
        <name>NAD(+)</name>
        <dbReference type="ChEBI" id="CHEBI:57540"/>
    </ligand>
</feature>
<feature type="binding site" evidence="2">
    <location>
        <position position="381"/>
    </location>
    <ligand>
        <name>NAD(+)</name>
        <dbReference type="ChEBI" id="CHEBI:57540"/>
    </ligand>
</feature>
<reference key="1">
    <citation type="journal article" date="2000" name="Nature">
        <title>Sequence and analysis of chromosome 1 of the plant Arabidopsis thaliana.</title>
        <authorList>
            <person name="Theologis A."/>
            <person name="Ecker J.R."/>
            <person name="Palm C.J."/>
            <person name="Federspiel N.A."/>
            <person name="Kaul S."/>
            <person name="White O."/>
            <person name="Alonso J."/>
            <person name="Altafi H."/>
            <person name="Araujo R."/>
            <person name="Bowman C.L."/>
            <person name="Brooks S.Y."/>
            <person name="Buehler E."/>
            <person name="Chan A."/>
            <person name="Chao Q."/>
            <person name="Chen H."/>
            <person name="Cheuk R.F."/>
            <person name="Chin C.W."/>
            <person name="Chung M.K."/>
            <person name="Conn L."/>
            <person name="Conway A.B."/>
            <person name="Conway A.R."/>
            <person name="Creasy T.H."/>
            <person name="Dewar K."/>
            <person name="Dunn P."/>
            <person name="Etgu P."/>
            <person name="Feldblyum T.V."/>
            <person name="Feng J.-D."/>
            <person name="Fong B."/>
            <person name="Fujii C.Y."/>
            <person name="Gill J.E."/>
            <person name="Goldsmith A.D."/>
            <person name="Haas B."/>
            <person name="Hansen N.F."/>
            <person name="Hughes B."/>
            <person name="Huizar L."/>
            <person name="Hunter J.L."/>
            <person name="Jenkins J."/>
            <person name="Johnson-Hopson C."/>
            <person name="Khan S."/>
            <person name="Khaykin E."/>
            <person name="Kim C.J."/>
            <person name="Koo H.L."/>
            <person name="Kremenetskaia I."/>
            <person name="Kurtz D.B."/>
            <person name="Kwan A."/>
            <person name="Lam B."/>
            <person name="Langin-Hooper S."/>
            <person name="Lee A."/>
            <person name="Lee J.M."/>
            <person name="Lenz C.A."/>
            <person name="Li J.H."/>
            <person name="Li Y.-P."/>
            <person name="Lin X."/>
            <person name="Liu S.X."/>
            <person name="Liu Z.A."/>
            <person name="Luros J.S."/>
            <person name="Maiti R."/>
            <person name="Marziali A."/>
            <person name="Militscher J."/>
            <person name="Miranda M."/>
            <person name="Nguyen M."/>
            <person name="Nierman W.C."/>
            <person name="Osborne B.I."/>
            <person name="Pai G."/>
            <person name="Peterson J."/>
            <person name="Pham P.K."/>
            <person name="Rizzo M."/>
            <person name="Rooney T."/>
            <person name="Rowley D."/>
            <person name="Sakano H."/>
            <person name="Salzberg S.L."/>
            <person name="Schwartz J.R."/>
            <person name="Shinn P."/>
            <person name="Southwick A.M."/>
            <person name="Sun H."/>
            <person name="Tallon L.J."/>
            <person name="Tambunga G."/>
            <person name="Toriumi M.J."/>
            <person name="Town C.D."/>
            <person name="Utterback T."/>
            <person name="Van Aken S."/>
            <person name="Vaysberg M."/>
            <person name="Vysotskaia V.S."/>
            <person name="Walker M."/>
            <person name="Wu D."/>
            <person name="Yu G."/>
            <person name="Fraser C.M."/>
            <person name="Venter J.C."/>
            <person name="Davis R.W."/>
        </authorList>
    </citation>
    <scope>NUCLEOTIDE SEQUENCE [LARGE SCALE GENOMIC DNA]</scope>
    <source>
        <strain>cv. Columbia</strain>
    </source>
</reference>
<reference key="2">
    <citation type="journal article" date="2017" name="Plant J.">
        <title>Araport11: a complete reannotation of the Arabidopsis thaliana reference genome.</title>
        <authorList>
            <person name="Cheng C.Y."/>
            <person name="Krishnakumar V."/>
            <person name="Chan A.P."/>
            <person name="Thibaud-Nissen F."/>
            <person name="Schobel S."/>
            <person name="Town C.D."/>
        </authorList>
    </citation>
    <scope>GENOME REANNOTATION</scope>
    <source>
        <strain>cv. Columbia</strain>
    </source>
</reference>
<reference key="3">
    <citation type="journal article" date="2003" name="Science">
        <title>Empirical analysis of transcriptional activity in the Arabidopsis genome.</title>
        <authorList>
            <person name="Yamada K."/>
            <person name="Lim J."/>
            <person name="Dale J.M."/>
            <person name="Chen H."/>
            <person name="Shinn P."/>
            <person name="Palm C.J."/>
            <person name="Southwick A.M."/>
            <person name="Wu H.C."/>
            <person name="Kim C.J."/>
            <person name="Nguyen M."/>
            <person name="Pham P.K."/>
            <person name="Cheuk R.F."/>
            <person name="Karlin-Newmann G."/>
            <person name="Liu S.X."/>
            <person name="Lam B."/>
            <person name="Sakano H."/>
            <person name="Wu T."/>
            <person name="Yu G."/>
            <person name="Miranda M."/>
            <person name="Quach H.L."/>
            <person name="Tripp M."/>
            <person name="Chang C.H."/>
            <person name="Lee J.M."/>
            <person name="Toriumi M.J."/>
            <person name="Chan M.M."/>
            <person name="Tang C.C."/>
            <person name="Onodera C.S."/>
            <person name="Deng J.M."/>
            <person name="Akiyama K."/>
            <person name="Ansari Y."/>
            <person name="Arakawa T."/>
            <person name="Banh J."/>
            <person name="Banno F."/>
            <person name="Bowser L."/>
            <person name="Brooks S.Y."/>
            <person name="Carninci P."/>
            <person name="Chao Q."/>
            <person name="Choy N."/>
            <person name="Enju A."/>
            <person name="Goldsmith A.D."/>
            <person name="Gurjal M."/>
            <person name="Hansen N.F."/>
            <person name="Hayashizaki Y."/>
            <person name="Johnson-Hopson C."/>
            <person name="Hsuan V.W."/>
            <person name="Iida K."/>
            <person name="Karnes M."/>
            <person name="Khan S."/>
            <person name="Koesema E."/>
            <person name="Ishida J."/>
            <person name="Jiang P.X."/>
            <person name="Jones T."/>
            <person name="Kawai J."/>
            <person name="Kamiya A."/>
            <person name="Meyers C."/>
            <person name="Nakajima M."/>
            <person name="Narusaka M."/>
            <person name="Seki M."/>
            <person name="Sakurai T."/>
            <person name="Satou M."/>
            <person name="Tamse R."/>
            <person name="Vaysberg M."/>
            <person name="Wallender E.K."/>
            <person name="Wong C."/>
            <person name="Yamamura Y."/>
            <person name="Yuan S."/>
            <person name="Shinozaki K."/>
            <person name="Davis R.W."/>
            <person name="Theologis A."/>
            <person name="Ecker J.R."/>
        </authorList>
    </citation>
    <scope>NUCLEOTIDE SEQUENCE [LARGE SCALE MRNA]</scope>
    <source>
        <strain>cv. Columbia</strain>
    </source>
</reference>
<organism>
    <name type="scientific">Arabidopsis thaliana</name>
    <name type="common">Mouse-ear cress</name>
    <dbReference type="NCBI Taxonomy" id="3702"/>
    <lineage>
        <taxon>Eukaryota</taxon>
        <taxon>Viridiplantae</taxon>
        <taxon>Streptophyta</taxon>
        <taxon>Embryophyta</taxon>
        <taxon>Tracheophyta</taxon>
        <taxon>Spermatophyta</taxon>
        <taxon>Magnoliopsida</taxon>
        <taxon>eudicotyledons</taxon>
        <taxon>Gunneridae</taxon>
        <taxon>Pentapetalae</taxon>
        <taxon>rosids</taxon>
        <taxon>malvids</taxon>
        <taxon>Brassicales</taxon>
        <taxon>Brassicaceae</taxon>
        <taxon>Camelineae</taxon>
        <taxon>Arabidopsis</taxon>
    </lineage>
</organism>
<sequence length="388" mass="42529">MDKTFFSSNEGKPITCKAAICRKAGEALVIEDIHVDPPQAYEVRIKILCTSLCHTDLTFWKLSFGPISRFPRILGHEAVGVVESIGENVDGFKQGDVVLPVFHPYCEECKDCKSSKTNWCDRYAEDFISNTRRYGMASRFKDSSGEVIHHFLFVSSFSEYTVVDIAHLVKISPEIPVDKAALLSCGVSTGIGAAWKVANVEEGSTIAIFGLGAVGLAVAEGARLRGAAKIIGIDTNSDKFELGKKFGFTDFINPTLCGEKKISEVIKEMTEGGVDYSFECVGLASLLNEAFISTRTGTGKTVMLGMEKHAAPISLGSFDLLRGRVICGSLFGGLKSKLDIPILVDHYLKKELNLDSFITHELNFKEINKAFALLEEGKSLRCILWMDK</sequence>
<keyword id="KW-0963">Cytoplasm</keyword>
<keyword id="KW-0479">Metal-binding</keyword>
<keyword id="KW-0520">NAD</keyword>
<keyword id="KW-0560">Oxidoreductase</keyword>
<keyword id="KW-1185">Reference proteome</keyword>
<keyword id="KW-0862">Zinc</keyword>